<accession>P00581</accession>
<gene>
    <name type="ordered locus">5</name>
</gene>
<proteinExistence type="evidence at protein level"/>
<feature type="chain" id="PRO_0000101269" description="DNA-directed DNA polymerase">
    <location>
        <begin position="1"/>
        <end position="704"/>
    </location>
</feature>
<feature type="region of interest" description="3'-5'exonuclease" evidence="1 8">
    <location>
        <begin position="1"/>
        <end position="187"/>
    </location>
</feature>
<feature type="region of interest" description="Polymerase" evidence="1 10">
    <location>
        <begin position="202"/>
        <end position="704"/>
    </location>
</feature>
<feature type="region of interest" description="Binding to host TrxA" evidence="3 9">
    <location>
        <begin position="262"/>
        <end position="338"/>
    </location>
</feature>
<feature type="binding site" evidence="1 10">
    <location>
        <position position="5"/>
    </location>
    <ligand>
        <name>Mg(2+)</name>
        <dbReference type="ChEBI" id="CHEBI:18420"/>
        <label>1</label>
        <note>catalytic; for 3'-5' exonuclease activity</note>
    </ligand>
</feature>
<feature type="binding site" evidence="1 10">
    <location>
        <position position="5"/>
    </location>
    <ligand>
        <name>Mg(2+)</name>
        <dbReference type="ChEBI" id="CHEBI:18420"/>
        <label>2</label>
        <note>catalytic; for 3'-5' exonuclease activity</note>
    </ligand>
</feature>
<feature type="binding site" evidence="1 10">
    <location>
        <position position="7"/>
    </location>
    <ligand>
        <name>Mg(2+)</name>
        <dbReference type="ChEBI" id="CHEBI:18420"/>
        <label>2</label>
        <note>catalytic; for 3'-5' exonuclease activity</note>
    </ligand>
</feature>
<feature type="binding site" evidence="1 10">
    <location>
        <position position="174"/>
    </location>
    <ligand>
        <name>Mg(2+)</name>
        <dbReference type="ChEBI" id="CHEBI:18420"/>
        <label>2</label>
        <note>catalytic; for 3'-5' exonuclease activity</note>
    </ligand>
</feature>
<feature type="binding site" evidence="1 8 11">
    <location>
        <position position="475"/>
    </location>
    <ligand>
        <name>Mg(2+)</name>
        <dbReference type="ChEBI" id="CHEBI:18420"/>
        <label>3</label>
        <note>catalytic; for polymerase activity</note>
    </ligand>
</feature>
<feature type="binding site" evidence="1 8 11">
    <location>
        <position position="475"/>
    </location>
    <ligand>
        <name>Mg(2+)</name>
        <dbReference type="ChEBI" id="CHEBI:18420"/>
        <label>4</label>
        <note>catalytic; for polymerase activity</note>
    </ligand>
</feature>
<feature type="binding site" evidence="1 8 11">
    <location>
        <position position="476"/>
    </location>
    <ligand>
        <name>Mg(2+)</name>
        <dbReference type="ChEBI" id="CHEBI:18420"/>
        <label>4</label>
        <note>catalytic; for polymerase activity</note>
    </ligand>
</feature>
<feature type="binding site" evidence="1 11">
    <location>
        <position position="506"/>
    </location>
    <ligand>
        <name>substrate</name>
    </ligand>
</feature>
<feature type="binding site" evidence="1 11">
    <location>
        <position position="518"/>
    </location>
    <ligand>
        <name>substrate</name>
    </ligand>
</feature>
<feature type="binding site" evidence="1 11">
    <location>
        <position position="522"/>
    </location>
    <ligand>
        <name>substrate</name>
    </ligand>
</feature>
<feature type="binding site" evidence="1 11">
    <location>
        <position position="526"/>
    </location>
    <ligand>
        <name>substrate</name>
    </ligand>
</feature>
<feature type="binding site" evidence="1 8 11">
    <location>
        <position position="654"/>
    </location>
    <ligand>
        <name>Mg(2+)</name>
        <dbReference type="ChEBI" id="CHEBI:18420"/>
        <label>3</label>
        <note>catalytic; for polymerase activity</note>
    </ligand>
</feature>
<feature type="binding site" evidence="1 8 11">
    <location>
        <position position="654"/>
    </location>
    <ligand>
        <name>Mg(2+)</name>
        <dbReference type="ChEBI" id="CHEBI:18420"/>
        <label>4</label>
        <note>catalytic; for polymerase activity</note>
    </ligand>
</feature>
<feature type="mutagenesis site" description="83% loss of exonuclease activity." evidence="6">
    <original>H</original>
    <variation>S</variation>
    <location>
        <position position="123"/>
    </location>
</feature>
<feature type="strand" evidence="18">
    <location>
        <begin position="2"/>
        <end position="10"/>
    </location>
</feature>
<feature type="helix" evidence="18">
    <location>
        <begin position="12"/>
        <end position="14"/>
    </location>
</feature>
<feature type="strand" evidence="18">
    <location>
        <begin position="18"/>
        <end position="25"/>
    </location>
</feature>
<feature type="turn" evidence="18">
    <location>
        <begin position="26"/>
        <end position="28"/>
    </location>
</feature>
<feature type="strand" evidence="18">
    <location>
        <begin position="31"/>
        <end position="34"/>
    </location>
</feature>
<feature type="helix" evidence="18">
    <location>
        <begin position="36"/>
        <end position="38"/>
    </location>
</feature>
<feature type="helix" evidence="18">
    <location>
        <begin position="39"/>
        <end position="51"/>
    </location>
</feature>
<feature type="strand" evidence="18">
    <location>
        <begin position="56"/>
        <end position="60"/>
    </location>
</feature>
<feature type="turn" evidence="18">
    <location>
        <begin position="61"/>
        <end position="64"/>
    </location>
</feature>
<feature type="helix" evidence="18">
    <location>
        <begin position="65"/>
        <end position="77"/>
    </location>
</feature>
<feature type="helix" evidence="18">
    <location>
        <begin position="85"/>
        <end position="87"/>
    </location>
</feature>
<feature type="strand" evidence="18">
    <location>
        <begin position="88"/>
        <end position="90"/>
    </location>
</feature>
<feature type="helix" evidence="18">
    <location>
        <begin position="91"/>
        <end position="98"/>
    </location>
</feature>
<feature type="turn" evidence="18">
    <location>
        <begin position="99"/>
        <end position="101"/>
    </location>
</feature>
<feature type="turn" evidence="18">
    <location>
        <begin position="106"/>
        <end position="109"/>
    </location>
</feature>
<feature type="helix" evidence="18">
    <location>
        <begin position="112"/>
        <end position="114"/>
    </location>
</feature>
<feature type="helix" evidence="19">
    <location>
        <begin position="117"/>
        <end position="119"/>
    </location>
</feature>
<feature type="helix" evidence="18">
    <location>
        <begin position="127"/>
        <end position="149"/>
    </location>
</feature>
<feature type="helix" evidence="18">
    <location>
        <begin position="158"/>
        <end position="160"/>
    </location>
</feature>
<feature type="helix" evidence="18">
    <location>
        <begin position="165"/>
        <end position="186"/>
    </location>
</feature>
<feature type="turn" evidence="18">
    <location>
        <begin position="189"/>
        <end position="191"/>
    </location>
</feature>
<feature type="helix" evidence="19">
    <location>
        <begin position="198"/>
        <end position="200"/>
    </location>
</feature>
<feature type="helix" evidence="18">
    <location>
        <begin position="203"/>
        <end position="209"/>
    </location>
</feature>
<feature type="helix" evidence="18">
    <location>
        <begin position="212"/>
        <end position="230"/>
    </location>
</feature>
<feature type="strand" evidence="18">
    <location>
        <begin position="232"/>
        <end position="234"/>
    </location>
</feature>
<feature type="helix" evidence="18">
    <location>
        <begin position="236"/>
        <end position="260"/>
    </location>
</feature>
<feature type="strand" evidence="18">
    <location>
        <begin position="264"/>
        <end position="267"/>
    </location>
</feature>
<feature type="turn" evidence="18">
    <location>
        <begin position="277"/>
        <end position="279"/>
    </location>
</feature>
<feature type="strand" evidence="13">
    <location>
        <begin position="284"/>
        <end position="286"/>
    </location>
</feature>
<feature type="turn" evidence="17">
    <location>
        <begin position="306"/>
        <end position="308"/>
    </location>
</feature>
<feature type="strand" evidence="17">
    <location>
        <begin position="318"/>
        <end position="320"/>
    </location>
</feature>
<feature type="strand" evidence="18">
    <location>
        <begin position="326"/>
        <end position="332"/>
    </location>
</feature>
<feature type="helix" evidence="18">
    <location>
        <begin position="339"/>
        <end position="348"/>
    </location>
</feature>
<feature type="turn" evidence="14">
    <location>
        <begin position="358"/>
        <end position="360"/>
    </location>
</feature>
<feature type="helix" evidence="18">
    <location>
        <begin position="366"/>
        <end position="371"/>
    </location>
</feature>
<feature type="helix" evidence="18">
    <location>
        <begin position="377"/>
        <end position="399"/>
    </location>
</feature>
<feature type="helix" evidence="18">
    <location>
        <begin position="406"/>
        <end position="409"/>
    </location>
</feature>
<feature type="strand" evidence="18">
    <location>
        <begin position="414"/>
        <end position="416"/>
    </location>
</feature>
<feature type="strand" evidence="18">
    <location>
        <begin position="419"/>
        <end position="421"/>
    </location>
</feature>
<feature type="strand" evidence="18">
    <location>
        <begin position="431"/>
        <end position="435"/>
    </location>
</feature>
<feature type="helix" evidence="12">
    <location>
        <begin position="437"/>
        <end position="439"/>
    </location>
</feature>
<feature type="helix" evidence="18">
    <location>
        <begin position="448"/>
        <end position="453"/>
    </location>
</feature>
<feature type="helix" evidence="18">
    <location>
        <begin position="457"/>
        <end position="459"/>
    </location>
</feature>
<feature type="turn" evidence="18">
    <location>
        <begin position="463"/>
        <end position="465"/>
    </location>
</feature>
<feature type="strand" evidence="18">
    <location>
        <begin position="470"/>
        <end position="476"/>
    </location>
</feature>
<feature type="helix" evidence="18">
    <location>
        <begin position="479"/>
        <end position="492"/>
    </location>
</feature>
<feature type="helix" evidence="18">
    <location>
        <begin position="495"/>
        <end position="502"/>
    </location>
</feature>
<feature type="helix" evidence="18">
    <location>
        <begin position="505"/>
        <end position="512"/>
    </location>
</feature>
<feature type="helix" evidence="18">
    <location>
        <begin position="518"/>
        <end position="529"/>
    </location>
</feature>
<feature type="helix" evidence="18">
    <location>
        <begin position="534"/>
        <end position="538"/>
    </location>
</feature>
<feature type="turn" evidence="18">
    <location>
        <begin position="539"/>
        <end position="542"/>
    </location>
</feature>
<feature type="helix" evidence="18">
    <location>
        <begin position="545"/>
        <end position="557"/>
    </location>
</feature>
<feature type="helix" evidence="18">
    <location>
        <begin position="560"/>
        <end position="571"/>
    </location>
</feature>
<feature type="strand" evidence="16">
    <location>
        <begin position="574"/>
        <end position="576"/>
    </location>
</feature>
<feature type="strand" evidence="15">
    <location>
        <begin position="581"/>
        <end position="583"/>
    </location>
</feature>
<feature type="strand" evidence="16">
    <location>
        <begin position="587"/>
        <end position="589"/>
    </location>
</feature>
<feature type="strand" evidence="18">
    <location>
        <begin position="591"/>
        <end position="594"/>
    </location>
</feature>
<feature type="strand" evidence="18">
    <location>
        <begin position="600"/>
        <end position="602"/>
    </location>
</feature>
<feature type="helix" evidence="18">
    <location>
        <begin position="606"/>
        <end position="608"/>
    </location>
</feature>
<feature type="helix" evidence="18">
    <location>
        <begin position="609"/>
        <end position="635"/>
    </location>
</feature>
<feature type="strand" evidence="18">
    <location>
        <begin position="644"/>
        <end position="652"/>
    </location>
</feature>
<feature type="strand" evidence="18">
    <location>
        <begin position="655"/>
        <end position="662"/>
    </location>
</feature>
<feature type="helix" evidence="18">
    <location>
        <begin position="663"/>
        <end position="683"/>
    </location>
</feature>
<feature type="strand" evidence="18">
    <location>
        <begin position="692"/>
        <end position="699"/>
    </location>
</feature>
<feature type="turn" evidence="18">
    <location>
        <begin position="700"/>
        <end position="703"/>
    </location>
</feature>
<keyword id="KW-0002">3D-structure</keyword>
<keyword id="KW-0235">DNA replication</keyword>
<keyword id="KW-0238">DNA-binding</keyword>
<keyword id="KW-0239">DNA-directed DNA polymerase</keyword>
<keyword id="KW-0269">Exonuclease</keyword>
<keyword id="KW-0945">Host-virus interaction</keyword>
<keyword id="KW-0378">Hydrolase</keyword>
<keyword id="KW-0460">Magnesium</keyword>
<keyword id="KW-0479">Metal-binding</keyword>
<keyword id="KW-0511">Multifunctional enzyme</keyword>
<keyword id="KW-0540">Nuclease</keyword>
<keyword id="KW-0548">Nucleotidyltransferase</keyword>
<keyword id="KW-1185">Reference proteome</keyword>
<keyword id="KW-0808">Transferase</keyword>
<keyword id="KW-1194">Viral DNA replication</keyword>
<dbReference type="EC" id="2.7.7.7" evidence="1 5"/>
<dbReference type="EC" id="3.1.11.-" evidence="1 2 6"/>
<dbReference type="EMBL" id="V01146">
    <property type="protein sequence ID" value="CAA24412.1"/>
    <property type="molecule type" value="Genomic_DNA"/>
</dbReference>
<dbReference type="PIR" id="A00716">
    <property type="entry name" value="DJBPT7"/>
</dbReference>
<dbReference type="RefSeq" id="NP_041982.1">
    <property type="nucleotide sequence ID" value="NC_001604.1"/>
</dbReference>
<dbReference type="PDB" id="1SKR">
    <property type="method" value="X-ray"/>
    <property type="resolution" value="2.40 A"/>
    <property type="chains" value="A=1-704"/>
</dbReference>
<dbReference type="PDB" id="1SKS">
    <property type="method" value="X-ray"/>
    <property type="resolution" value="2.30 A"/>
    <property type="chains" value="A=1-704"/>
</dbReference>
<dbReference type="PDB" id="1SKW">
    <property type="method" value="X-ray"/>
    <property type="resolution" value="2.30 A"/>
    <property type="chains" value="A=1-704"/>
</dbReference>
<dbReference type="PDB" id="1SL0">
    <property type="method" value="X-ray"/>
    <property type="resolution" value="3.20 A"/>
    <property type="chains" value="A/C=1-704"/>
</dbReference>
<dbReference type="PDB" id="1SL1">
    <property type="method" value="X-ray"/>
    <property type="resolution" value="2.20 A"/>
    <property type="chains" value="A=1-704"/>
</dbReference>
<dbReference type="PDB" id="1SL2">
    <property type="method" value="X-ray"/>
    <property type="resolution" value="2.30 A"/>
    <property type="chains" value="A=1-704"/>
</dbReference>
<dbReference type="PDB" id="1T7P">
    <property type="method" value="X-ray"/>
    <property type="resolution" value="2.20 A"/>
    <property type="chains" value="A=1-704"/>
</dbReference>
<dbReference type="PDB" id="1T8E">
    <property type="method" value="X-ray"/>
    <property type="resolution" value="2.54 A"/>
    <property type="chains" value="A=1-704"/>
</dbReference>
<dbReference type="PDB" id="1TK0">
    <property type="method" value="X-ray"/>
    <property type="resolution" value="2.30 A"/>
    <property type="chains" value="A=1-704"/>
</dbReference>
<dbReference type="PDB" id="1TK5">
    <property type="method" value="X-ray"/>
    <property type="resolution" value="2.20 A"/>
    <property type="chains" value="A=1-704"/>
</dbReference>
<dbReference type="PDB" id="1TK8">
    <property type="method" value="X-ray"/>
    <property type="resolution" value="2.50 A"/>
    <property type="chains" value="A=1-704"/>
</dbReference>
<dbReference type="PDB" id="1TKD">
    <property type="method" value="X-ray"/>
    <property type="resolution" value="2.49 A"/>
    <property type="chains" value="A=1-704"/>
</dbReference>
<dbReference type="PDB" id="1X9M">
    <property type="method" value="X-ray"/>
    <property type="resolution" value="2.10 A"/>
    <property type="chains" value="A=1-704"/>
</dbReference>
<dbReference type="PDB" id="1X9S">
    <property type="method" value="X-ray"/>
    <property type="resolution" value="2.70 A"/>
    <property type="chains" value="A=1-704"/>
</dbReference>
<dbReference type="PDB" id="1X9W">
    <property type="method" value="X-ray"/>
    <property type="resolution" value="2.30 A"/>
    <property type="chains" value="A=1-704"/>
</dbReference>
<dbReference type="PDB" id="1ZYQ">
    <property type="method" value="X-ray"/>
    <property type="resolution" value="2.70 A"/>
    <property type="chains" value="A=1-698"/>
</dbReference>
<dbReference type="PDB" id="2AJQ">
    <property type="method" value="X-ray"/>
    <property type="resolution" value="2.60 A"/>
    <property type="chains" value="A/F=1-704"/>
</dbReference>
<dbReference type="PDB" id="5IKN">
    <property type="method" value="X-ray"/>
    <property type="resolution" value="4.80 A"/>
    <property type="chains" value="A/B/C=1-704"/>
</dbReference>
<dbReference type="PDB" id="6N7W">
    <property type="method" value="EM"/>
    <property type="resolution" value="4.50 A"/>
    <property type="chains" value="H=1-704"/>
</dbReference>
<dbReference type="PDB" id="6N9U">
    <property type="method" value="EM"/>
    <property type="resolution" value="3.70 A"/>
    <property type="chains" value="H=1-704"/>
</dbReference>
<dbReference type="PDB" id="6N9V">
    <property type="method" value="EM"/>
    <property type="resolution" value="4.00 A"/>
    <property type="chains" value="H=1-704"/>
</dbReference>
<dbReference type="PDB" id="6N9W">
    <property type="method" value="EM"/>
    <property type="resolution" value="4.00 A"/>
    <property type="chains" value="H=1-704"/>
</dbReference>
<dbReference type="PDB" id="6N9X">
    <property type="method" value="EM"/>
    <property type="resolution" value="4.10 A"/>
    <property type="chains" value="H=1-704"/>
</dbReference>
<dbReference type="PDB" id="6P7E">
    <property type="method" value="X-ray"/>
    <property type="resolution" value="3.00 A"/>
    <property type="chains" value="A/B/C/D=1-704"/>
</dbReference>
<dbReference type="PDBsum" id="1SKR"/>
<dbReference type="PDBsum" id="1SKS"/>
<dbReference type="PDBsum" id="1SKW"/>
<dbReference type="PDBsum" id="1SL0"/>
<dbReference type="PDBsum" id="1SL1"/>
<dbReference type="PDBsum" id="1SL2"/>
<dbReference type="PDBsum" id="1T7P"/>
<dbReference type="PDBsum" id="1T8E"/>
<dbReference type="PDBsum" id="1TK0"/>
<dbReference type="PDBsum" id="1TK5"/>
<dbReference type="PDBsum" id="1TK8"/>
<dbReference type="PDBsum" id="1TKD"/>
<dbReference type="PDBsum" id="1X9M"/>
<dbReference type="PDBsum" id="1X9S"/>
<dbReference type="PDBsum" id="1X9W"/>
<dbReference type="PDBsum" id="1ZYQ"/>
<dbReference type="PDBsum" id="2AJQ"/>
<dbReference type="PDBsum" id="5IKN"/>
<dbReference type="PDBsum" id="6N7W"/>
<dbReference type="PDBsum" id="6N9U"/>
<dbReference type="PDBsum" id="6N9V"/>
<dbReference type="PDBsum" id="6N9W"/>
<dbReference type="PDBsum" id="6N9X"/>
<dbReference type="PDBsum" id="6P7E"/>
<dbReference type="EMDB" id="EMD-0365"/>
<dbReference type="EMDB" id="EMD-0379"/>
<dbReference type="EMDB" id="EMD-0380"/>
<dbReference type="EMDB" id="EMD-0381"/>
<dbReference type="EMDB" id="EMD-0382"/>
<dbReference type="EMDB" id="EMD-0386"/>
<dbReference type="EMDB" id="EMD-0387"/>
<dbReference type="EMDB" id="EMD-0388"/>
<dbReference type="EMDB" id="EMD-0389"/>
<dbReference type="EMDB" id="EMD-0390"/>
<dbReference type="EMDB" id="EMD-0391"/>
<dbReference type="EMDB" id="EMD-0392"/>
<dbReference type="EMDB" id="EMD-0393"/>
<dbReference type="EMDB" id="EMD-0394"/>
<dbReference type="EMDB" id="EMD-0395"/>
<dbReference type="SMR" id="P00581"/>
<dbReference type="DIP" id="DIP-41665N"/>
<dbReference type="IntAct" id="P00581">
    <property type="interactions" value="5"/>
</dbReference>
<dbReference type="MINT" id="P00581"/>
<dbReference type="KEGG" id="vg:1261044"/>
<dbReference type="OrthoDB" id="3561at10239"/>
<dbReference type="EvolutionaryTrace" id="P00581"/>
<dbReference type="Proteomes" id="UP000000840">
    <property type="component" value="Genome"/>
</dbReference>
<dbReference type="GO" id="GO:0008408">
    <property type="term" value="F:3'-5' exonuclease activity"/>
    <property type="evidence" value="ECO:0000315"/>
    <property type="project" value="UniProtKB"/>
</dbReference>
<dbReference type="GO" id="GO:0003677">
    <property type="term" value="F:DNA binding"/>
    <property type="evidence" value="ECO:0007669"/>
    <property type="project" value="UniProtKB-UniRule"/>
</dbReference>
<dbReference type="GO" id="GO:0004529">
    <property type="term" value="F:DNA exonuclease activity"/>
    <property type="evidence" value="ECO:0000315"/>
    <property type="project" value="CACAO"/>
</dbReference>
<dbReference type="GO" id="GO:0003887">
    <property type="term" value="F:DNA-directed DNA polymerase activity"/>
    <property type="evidence" value="ECO:0000314"/>
    <property type="project" value="CACAO"/>
</dbReference>
<dbReference type="GO" id="GO:0046872">
    <property type="term" value="F:metal ion binding"/>
    <property type="evidence" value="ECO:0007669"/>
    <property type="project" value="UniProtKB-KW"/>
</dbReference>
<dbReference type="GO" id="GO:0000166">
    <property type="term" value="F:nucleotide binding"/>
    <property type="evidence" value="ECO:0007669"/>
    <property type="project" value="UniProtKB-UniRule"/>
</dbReference>
<dbReference type="GO" id="GO:0090592">
    <property type="term" value="P:DNA synthesis involved in DNA replication"/>
    <property type="evidence" value="ECO:0000315"/>
    <property type="project" value="CACAO"/>
</dbReference>
<dbReference type="GO" id="GO:0006261">
    <property type="term" value="P:DNA-templated DNA replication"/>
    <property type="evidence" value="ECO:0000314"/>
    <property type="project" value="FlyBase"/>
</dbReference>
<dbReference type="GO" id="GO:0006302">
    <property type="term" value="P:double-strand break repair"/>
    <property type="evidence" value="ECO:0007669"/>
    <property type="project" value="TreeGrafter"/>
</dbReference>
<dbReference type="GO" id="GO:0039693">
    <property type="term" value="P:viral DNA genome replication"/>
    <property type="evidence" value="ECO:0007669"/>
    <property type="project" value="UniProtKB-KW"/>
</dbReference>
<dbReference type="FunFam" id="1.20.1060.10:FF:000007">
    <property type="entry name" value="DNA-directed DNA polymerase"/>
    <property type="match status" value="1"/>
</dbReference>
<dbReference type="FunFam" id="3.30.420.10:FF:000164">
    <property type="entry name" value="DNA-directed DNA polymerase"/>
    <property type="match status" value="1"/>
</dbReference>
<dbReference type="FunFam" id="3.30.70.370:FF:000013">
    <property type="entry name" value="DNA-directed DNA polymerase"/>
    <property type="match status" value="1"/>
</dbReference>
<dbReference type="Gene3D" id="3.30.70.370">
    <property type="match status" value="2"/>
</dbReference>
<dbReference type="Gene3D" id="3.30.420.10">
    <property type="entry name" value="Ribonuclease H-like superfamily/Ribonuclease H"/>
    <property type="match status" value="1"/>
</dbReference>
<dbReference type="Gene3D" id="1.20.1060.10">
    <property type="entry name" value="Taq DNA Polymerase, Chain T, domain 4"/>
    <property type="match status" value="1"/>
</dbReference>
<dbReference type="HAMAP" id="MF_04101">
    <property type="entry name" value="DPOL_T7"/>
    <property type="match status" value="1"/>
</dbReference>
<dbReference type="InterPro" id="IPR019760">
    <property type="entry name" value="DNA-dir_DNA_pol_A_CS"/>
</dbReference>
<dbReference type="InterPro" id="IPR001098">
    <property type="entry name" value="DNA-dir_DNA_pol_A_palm_dom"/>
</dbReference>
<dbReference type="InterPro" id="IPR043502">
    <property type="entry name" value="DNA/RNA_pol_sf"/>
</dbReference>
<dbReference type="InterPro" id="IPR002298">
    <property type="entry name" value="DNA_polymerase_A"/>
</dbReference>
<dbReference type="InterPro" id="IPR034699">
    <property type="entry name" value="DPOL_T7"/>
</dbReference>
<dbReference type="InterPro" id="IPR012337">
    <property type="entry name" value="RNaseH-like_sf"/>
</dbReference>
<dbReference type="InterPro" id="IPR036397">
    <property type="entry name" value="RNaseH_sf"/>
</dbReference>
<dbReference type="PANTHER" id="PTHR10133">
    <property type="entry name" value="DNA POLYMERASE I"/>
    <property type="match status" value="1"/>
</dbReference>
<dbReference type="PANTHER" id="PTHR10133:SF27">
    <property type="entry name" value="DNA POLYMERASE NU"/>
    <property type="match status" value="1"/>
</dbReference>
<dbReference type="Pfam" id="PF00476">
    <property type="entry name" value="DNA_pol_A"/>
    <property type="match status" value="1"/>
</dbReference>
<dbReference type="PRINTS" id="PR00868">
    <property type="entry name" value="DNAPOLI"/>
</dbReference>
<dbReference type="SMART" id="SM00482">
    <property type="entry name" value="POLAc"/>
    <property type="match status" value="1"/>
</dbReference>
<dbReference type="SUPFAM" id="SSF56672">
    <property type="entry name" value="DNA/RNA polymerases"/>
    <property type="match status" value="1"/>
</dbReference>
<dbReference type="SUPFAM" id="SSF53098">
    <property type="entry name" value="Ribonuclease H-like"/>
    <property type="match status" value="1"/>
</dbReference>
<dbReference type="PROSITE" id="PS00447">
    <property type="entry name" value="DNA_POLYMERASE_A"/>
    <property type="match status" value="1"/>
</dbReference>
<organism>
    <name type="scientific">Escherichia phage T7</name>
    <name type="common">Bacteriophage T7</name>
    <dbReference type="NCBI Taxonomy" id="10760"/>
    <lineage>
        <taxon>Viruses</taxon>
        <taxon>Duplodnaviria</taxon>
        <taxon>Heunggongvirae</taxon>
        <taxon>Uroviricota</taxon>
        <taxon>Caudoviricetes</taxon>
        <taxon>Autographiviridae</taxon>
        <taxon>Studiervirinae</taxon>
        <taxon>Teseptimavirus</taxon>
        <taxon>Teseptimavirus T7</taxon>
    </lineage>
</organism>
<name>DPOL_BPT7</name>
<organismHost>
    <name type="scientific">Escherichia coli</name>
    <dbReference type="NCBI Taxonomy" id="562"/>
</organismHost>
<comment type="function">
    <text evidence="1 2 4 6 7">Replicates viral genomic DNA. This polymerase possesses two enzymatic activities: DNA synthesis (polymerase) and an exonucleolytic activity that degrades single-stranded DNA in the 3'-5' direction (By similarity). Non-processive DNA polymerase that achieves processivity by binding to host thioredoxin (TrxA). This interaction increases the rate of dNTP incorporation to yield a processivity of approximately 800 nucleotides (nt) per binding event. Interacts with DNA helicase gp4 to coordinate nucleotide polymerization with unwinding of the DNA. The leading strand is synthesized continuously while synthesis of the lagging strand requires the synthesis of oligoribonucleotides by the primase domain of gp4.</text>
</comment>
<comment type="catalytic activity">
    <reaction evidence="1 5">
        <text>DNA(n) + a 2'-deoxyribonucleoside 5'-triphosphate = DNA(n+1) + diphosphate</text>
        <dbReference type="Rhea" id="RHEA:22508"/>
        <dbReference type="Rhea" id="RHEA-COMP:17339"/>
        <dbReference type="Rhea" id="RHEA-COMP:17340"/>
        <dbReference type="ChEBI" id="CHEBI:33019"/>
        <dbReference type="ChEBI" id="CHEBI:61560"/>
        <dbReference type="ChEBI" id="CHEBI:173112"/>
        <dbReference type="EC" id="2.7.7.7"/>
    </reaction>
</comment>
<comment type="cofactor">
    <cofactor evidence="1 10">
        <name>Mg(2+)</name>
        <dbReference type="ChEBI" id="CHEBI:18420"/>
    </cofactor>
</comment>
<comment type="subunit">
    <text evidence="3 7">Composed of two subunits. One is encoded by the phage and the other is encoded by the host thioredoxin. Interacts with DNA primase/helicase; this interaction is essential for the coordination of DNA unwinding and nucleotide polymerization on duplex DNA. Interacts with the ssDNA-binding protein. Part of the replicase complex that includes the DNA polymerase, thioredoxin, the primase/helicase and the single-stranded DNA binding protein.</text>
</comment>
<comment type="interaction">
    <interactant intactId="EBI-8664634">
        <id>P00581</id>
    </interactant>
    <interactant intactId="EBI-8664802">
        <id>P03692</id>
        <label>4</label>
    </interactant>
    <organismsDiffer>false</organismsDiffer>
    <experiments>2</experiments>
</comment>
<comment type="interaction">
    <interactant intactId="EBI-8664634">
        <id>P00581</id>
    </interactant>
    <interactant intactId="EBI-368542">
        <id>P0AA25</id>
        <label>trxA</label>
    </interactant>
    <organismsDiffer>true</organismsDiffer>
    <experiments>2</experiments>
</comment>
<comment type="similarity">
    <text evidence="1">Belongs to the DNA polymerase type-A family.</text>
</comment>
<sequence>MIVSDIEANALLESVTKFHCGVIYDYSTAEYVSYRPSDFGAYLDALEAEVARGGLIVFHNGHKYDVPALTKLAKLQLNREFHLPRENCIDTLVLSRLIHSNLKDTDMGLLRSGKLPGKRFGSHALEAWGYRLGEMKGEYKDDFKRMLEEQGEEYVDGMEWWNFNEEMMDYNVQDVVVTKALLEKLLSDKHYFPPEIDFTDVGYTTFWSESLEAVDIEHRAAWLLAKQERNGFPFDTKAIEELYVELAARRSELLRKLTETFGSWYQPKGGTEMFCHPRTGKPLPKYPRIKTPKVGGIFKKPKNKAQREGREPCELDTREYVAGAPYTPVEHVVFNPSSRDHIQKKLQEAGWVPTKYTDKGAPVVDDEVLEGVRVDDPEKQAAIDLIKEYLMIQKRIGQSAEGDKAWLRYVAEDGKIHGSVNPNGAVTGRATHAFPNLAQIPGVRSPYGEQCRAAFGAEHHLDGITGKPWVQAGIDASGLELRCLAHFMARFDNGEYAHEILNGDIHTKNQIAAELPTRDNAKTFIYGFLYGAGDEKIGQIVGAGKERGKELKKKFLENTPAIAALRESIQQTLVESSQWVAGEQQVKWKRRWIKGLDGRKVHVRSPHAALNTLLQSAGALICKLWIIKTEEMLVEKGLKHGWDGDFAYMAWVHDEIQVGCRTEEIAQVVIETAQEAMRWVGDHWNFRCLLDTEGKMGPNWAICH</sequence>
<evidence type="ECO:0000255" key="1">
    <source>
        <dbReference type="HAMAP-Rule" id="MF_04101"/>
    </source>
</evidence>
<evidence type="ECO:0000269" key="2">
    <source>
    </source>
</evidence>
<evidence type="ECO:0000269" key="3">
    <source>
    </source>
</evidence>
<evidence type="ECO:0000269" key="4">
    <source>
    </source>
</evidence>
<evidence type="ECO:0000269" key="5">
    <source>
    </source>
</evidence>
<evidence type="ECO:0000269" key="6">
    <source>
    </source>
</evidence>
<evidence type="ECO:0000269" key="7">
    <source>
    </source>
</evidence>
<evidence type="ECO:0000269" key="8">
    <source>
    </source>
</evidence>
<evidence type="ECO:0000303" key="9">
    <source>
    </source>
</evidence>
<evidence type="ECO:0000305" key="10">
    <source>
    </source>
</evidence>
<evidence type="ECO:0000305" key="11">
    <source>
    </source>
</evidence>
<evidence type="ECO:0007829" key="12">
    <source>
        <dbReference type="PDB" id="1SKS"/>
    </source>
</evidence>
<evidence type="ECO:0007829" key="13">
    <source>
        <dbReference type="PDB" id="1SL2"/>
    </source>
</evidence>
<evidence type="ECO:0007829" key="14">
    <source>
        <dbReference type="PDB" id="1T7P"/>
    </source>
</evidence>
<evidence type="ECO:0007829" key="15">
    <source>
        <dbReference type="PDB" id="1T8E"/>
    </source>
</evidence>
<evidence type="ECO:0007829" key="16">
    <source>
        <dbReference type="PDB" id="1TK0"/>
    </source>
</evidence>
<evidence type="ECO:0007829" key="17">
    <source>
        <dbReference type="PDB" id="1TK5"/>
    </source>
</evidence>
<evidence type="ECO:0007829" key="18">
    <source>
        <dbReference type="PDB" id="1X9M"/>
    </source>
</evidence>
<evidence type="ECO:0007829" key="19">
    <source>
        <dbReference type="PDB" id="2AJQ"/>
    </source>
</evidence>
<protein>
    <recommendedName>
        <fullName evidence="1">DNA-directed DNA polymerase</fullName>
        <ecNumber evidence="1 5">2.7.7.7</ecNumber>
        <ecNumber evidence="1 2 6">3.1.11.-</ecNumber>
    </recommendedName>
    <alternativeName>
        <fullName>Gene product 5</fullName>
        <shortName>Gp5</shortName>
    </alternativeName>
</protein>
<reference key="1">
    <citation type="journal article" date="1983" name="J. Mol. Biol.">
        <title>Complete nucleotide sequence of bacteriophage T7 DNA and the locations of T7 genetic elements.</title>
        <authorList>
            <person name="Dunn J.J."/>
            <person name="Studier F.W."/>
        </authorList>
    </citation>
    <scope>NUCLEOTIDE SEQUENCE [LARGE SCALE GENOMIC DNA]</scope>
</reference>
<reference key="2">
    <citation type="journal article" date="1984" name="J. Mol. Biol.">
        <title>Nucleotide sequence of the gene for bacteriophage T7 RNA polymerase.</title>
        <authorList>
            <person name="Moffatt B.A."/>
            <person name="Dunn J.J."/>
            <person name="Studier F.W."/>
        </authorList>
    </citation>
    <scope>NUCLEOTIDE SEQUENCE [GENOMIC DNA]</scope>
</reference>
<reference key="3">
    <citation type="journal article" date="1989" name="J. Biol. Chem.">
        <title>Selective inactivation of the exonuclease activity of bacteriophage T7 DNA polymerase by in vitro mutagenesis.</title>
        <authorList>
            <person name="Tabor S."/>
            <person name="Richardson C.C."/>
        </authorList>
    </citation>
    <scope>FUNCTION</scope>
    <scope>MUTAGENESIS OF HIS-123</scope>
    <scope>CATALYTIC ACTIVITY</scope>
</reference>
<reference key="4">
    <citation type="journal article" date="1997" name="J. Biol. Chem.">
        <title>The acidic carboxyl terminus of the bacteriophage T7 gene 4 helicase/primase interacts with T7 DNA polymerase.</title>
        <authorList>
            <person name="Notarnicola S.M."/>
            <person name="Mulcahy H.L."/>
            <person name="Lee J."/>
            <person name="Richardson C.C."/>
        </authorList>
    </citation>
    <scope>FUNCTION</scope>
    <scope>INTERACTION WITH PROTEIN GP4</scope>
</reference>
<reference key="5">
    <citation type="journal article" date="1998" name="Curr. Opin. Struct. Biol.">
        <title>The mechanism of action of T7 DNA polymerase.</title>
        <authorList>
            <person name="Doublie S."/>
            <person name="Ellenberger T."/>
        </authorList>
    </citation>
    <scope>COFACTOR</scope>
</reference>
<reference key="6">
    <citation type="journal article" date="2004" name="J. Biol. Chem.">
        <title>A unique region in bacteriophage t7 DNA polymerase important for exonucleolytic hydrolysis of DNA.</title>
        <authorList>
            <person name="Kumar J.K."/>
            <person name="Chiu E.T."/>
            <person name="Tabor S."/>
            <person name="Richardson C.C."/>
        </authorList>
    </citation>
    <scope>FUNCTION</scope>
    <scope>CATALYTIC ACTIVITY</scope>
</reference>
<reference key="7">
    <citation type="journal article" date="2005" name="Proc. Natl. Acad. Sci. U.S.A.">
        <title>A unique loop in T7 DNA polymerase mediates the binding of helicase-primase, DNA binding protein, and processivity factor.</title>
        <authorList>
            <person name="Hamdan S.M."/>
            <person name="Marintcheva B."/>
            <person name="Cook T."/>
            <person name="Lee S.J."/>
            <person name="Tabor S."/>
            <person name="Richardson C.C."/>
        </authorList>
    </citation>
    <scope>INTERACTION WITH THE SSDNA-BINDING PROTEIN; DNA PRIMASE/HELICASE AND HOST TRXA</scope>
    <scope>IDENTIFICATION IN THE REPLICASE COMPLEX</scope>
</reference>
<reference key="8">
    <citation type="journal article" date="2011" name="Curr. Opin. Chem. Biol.">
        <title>Choreography of bacteriophage T7 DNA replication.</title>
        <authorList>
            <person name="Lee S.J."/>
            <person name="Richardson C.C."/>
        </authorList>
    </citation>
    <scope>REVIEW ON FUNCTION</scope>
</reference>
<reference key="9">
    <citation type="journal article" date="2011" name="Proc. Natl. Acad. Sci. U.S.A.">
        <title>Helicase-DNA polymerase interaction is critical to initiate leading-strand DNA synthesis.</title>
        <authorList>
            <person name="Zhang H."/>
            <person name="Lee S.J."/>
            <person name="Zhu B."/>
            <person name="Tran N.Q."/>
            <person name="Tabor S."/>
            <person name="Richardson C.C."/>
        </authorList>
    </citation>
    <scope>FUNCTION</scope>
</reference>
<reference key="10">
    <citation type="journal article" date="2014" name="Proc. Natl. Acad. Sci. U.S.A.">
        <title>Single-molecule studies of polymerase dynamics and stoichiometry at the bacteriophage T7 replication machinery.</title>
        <authorList>
            <person name="Geertsema H.J."/>
            <person name="Kulczyk A.W."/>
            <person name="Richardson C.C."/>
            <person name="van Oijen A.M."/>
        </authorList>
    </citation>
    <scope>CATALYTIC ACTIVITY</scope>
</reference>
<reference key="11">
    <citation type="journal article" date="1998" name="Nature">
        <title>Crystal structure of a bacteriophage T7 DNA replication complex at 2.2-A resolution.</title>
        <authorList>
            <person name="Doublie S."/>
            <person name="Tabor S."/>
            <person name="Long A.M."/>
            <person name="Richardson C.C."/>
            <person name="Ellenberger T."/>
        </authorList>
    </citation>
    <scope>X-RAY CRYSTALLOGRAPHY (2.2 ANGSTROMS) IN COMPLEX WITH MANGANESE AND ZINC</scope>
    <scope>COFACTOR</scope>
</reference>